<accession>Q9C1J4</accession>
<gene>
    <name type="primary">ADE1</name>
</gene>
<keyword id="KW-0067">ATP-binding</keyword>
<keyword id="KW-0436">Ligase</keyword>
<keyword id="KW-0547">Nucleotide-binding</keyword>
<keyword id="KW-0658">Purine biosynthesis</keyword>
<protein>
    <recommendedName>
        <fullName>Phosphoribosylaminoimidazole-succinocarboxamide synthase</fullName>
        <ecNumber>6.3.2.6</ecNumber>
    </recommendedName>
    <alternativeName>
        <fullName>SAICAR synthetase</fullName>
    </alternativeName>
</protein>
<comment type="catalytic activity">
    <reaction>
        <text>5-amino-1-(5-phospho-D-ribosyl)imidazole-4-carboxylate + L-aspartate + ATP = (2S)-2-[5-amino-1-(5-phospho-beta-D-ribosyl)imidazole-4-carboxamido]succinate + ADP + phosphate + 2 H(+)</text>
        <dbReference type="Rhea" id="RHEA:22628"/>
        <dbReference type="ChEBI" id="CHEBI:15378"/>
        <dbReference type="ChEBI" id="CHEBI:29991"/>
        <dbReference type="ChEBI" id="CHEBI:30616"/>
        <dbReference type="ChEBI" id="CHEBI:43474"/>
        <dbReference type="ChEBI" id="CHEBI:58443"/>
        <dbReference type="ChEBI" id="CHEBI:77657"/>
        <dbReference type="ChEBI" id="CHEBI:456216"/>
        <dbReference type="EC" id="6.3.2.6"/>
    </reaction>
</comment>
<comment type="pathway">
    <text>Purine metabolism; IMP biosynthesis via de novo pathway; 5-amino-1-(5-phospho-D-ribosyl)imidazole-4-carboxamide from 5-amino-1-(5-phospho-D-ribosyl)imidazole-4-carboxylate: step 1/2.</text>
</comment>
<comment type="similarity">
    <text evidence="1">Belongs to the SAICAR synthetase family.</text>
</comment>
<organism>
    <name type="scientific">Komagataella pastoris</name>
    <name type="common">Yeast</name>
    <name type="synonym">Pichia pastoris</name>
    <dbReference type="NCBI Taxonomy" id="4922"/>
    <lineage>
        <taxon>Eukaryota</taxon>
        <taxon>Fungi</taxon>
        <taxon>Dikarya</taxon>
        <taxon>Ascomycota</taxon>
        <taxon>Saccharomycotina</taxon>
        <taxon>Pichiomycetes</taxon>
        <taxon>Pichiales</taxon>
        <taxon>Pichiaceae</taxon>
        <taxon>Komagataella</taxon>
    </lineage>
</organism>
<sequence>MSIVNTDLDGILPLIAKGKVRDIYAVDENNLLFVATDRISAYDVIMTNGIPDKGKILTQLSVFWFDFLAPYIKNHLVASNDKEVFALLPSKLSEEKYKSQLEGRSLIVKKHRLIPLEAIVRGYITGSAWKEYKNSKTVHGVKVENENLQESDAFPTPIFTPSTKAEQGEHDENISIEQAAEIVGKDICEKVAVKAVELYSAAKNFALLKGIIIADTKFEFGLDENNELVLVDEVLTPDSSRFWNQKTYQVGKSQESYDKQFLRDWLTANGLNGKEGVAMDAEIAIKSKEKYIEAYEAITGKKWA</sequence>
<evidence type="ECO:0000305" key="1"/>
<feature type="chain" id="PRO_0000100927" description="Phosphoribosylaminoimidazole-succinocarboxamide synthase">
    <location>
        <begin position="1"/>
        <end position="304"/>
    </location>
</feature>
<reference key="1">
    <citation type="journal article" date="2001" name="Gene">
        <title>New selectable marker/auxotrophic host strain combinations for molecular genetic manipulation of Pichia pastoris.</title>
        <authorList>
            <person name="Lin Cereghino G.P."/>
            <person name="Lin Cereghino J."/>
            <person name="Sunga A.J."/>
            <person name="Johnson M.A."/>
            <person name="Lim M."/>
            <person name="Gleeson M.A.G."/>
            <person name="Cregg J.M."/>
        </authorList>
    </citation>
    <scope>NUCLEOTIDE SEQUENCE [GENOMIC DNA]</scope>
</reference>
<proteinExistence type="inferred from homology"/>
<name>PUR7_PICPA</name>
<dbReference type="EC" id="6.3.2.6"/>
<dbReference type="EMBL" id="AF321096">
    <property type="protein sequence ID" value="AAK06766.1"/>
    <property type="molecule type" value="Genomic_DNA"/>
</dbReference>
<dbReference type="SMR" id="Q9C1J4"/>
<dbReference type="UniPathway" id="UPA00074">
    <property type="reaction ID" value="UER00131"/>
</dbReference>
<dbReference type="GO" id="GO:0005737">
    <property type="term" value="C:cytoplasm"/>
    <property type="evidence" value="ECO:0007669"/>
    <property type="project" value="TreeGrafter"/>
</dbReference>
<dbReference type="GO" id="GO:0005524">
    <property type="term" value="F:ATP binding"/>
    <property type="evidence" value="ECO:0007669"/>
    <property type="project" value="UniProtKB-KW"/>
</dbReference>
<dbReference type="GO" id="GO:0004639">
    <property type="term" value="F:phosphoribosylaminoimidazolesuccinocarboxamide synthase activity"/>
    <property type="evidence" value="ECO:0007669"/>
    <property type="project" value="UniProtKB-EC"/>
</dbReference>
<dbReference type="GO" id="GO:0006189">
    <property type="term" value="P:'de novo' IMP biosynthetic process"/>
    <property type="evidence" value="ECO:0007669"/>
    <property type="project" value="UniProtKB-UniPathway"/>
</dbReference>
<dbReference type="CDD" id="cd01414">
    <property type="entry name" value="SAICAR_synt_Sc"/>
    <property type="match status" value="1"/>
</dbReference>
<dbReference type="FunFam" id="3.30.200.20:FF:000392">
    <property type="entry name" value="Phosphoribosylaminoimidazole-succinocarboxamide synthase"/>
    <property type="match status" value="1"/>
</dbReference>
<dbReference type="FunFam" id="3.30.470.20:FF:000015">
    <property type="entry name" value="Phosphoribosylaminoimidazole-succinocarboxamide synthase"/>
    <property type="match status" value="1"/>
</dbReference>
<dbReference type="Gene3D" id="3.30.470.20">
    <property type="entry name" value="ATP-grasp fold, B domain"/>
    <property type="match status" value="1"/>
</dbReference>
<dbReference type="Gene3D" id="3.30.200.20">
    <property type="entry name" value="Phosphorylase Kinase, domain 1"/>
    <property type="match status" value="1"/>
</dbReference>
<dbReference type="HAMAP" id="MF_00137">
    <property type="entry name" value="SAICAR_synth"/>
    <property type="match status" value="1"/>
</dbReference>
<dbReference type="InterPro" id="IPR028923">
    <property type="entry name" value="SAICAR_synt/ADE2_N"/>
</dbReference>
<dbReference type="InterPro" id="IPR001636">
    <property type="entry name" value="SAICAR_synth"/>
</dbReference>
<dbReference type="InterPro" id="IPR018236">
    <property type="entry name" value="SAICAR_synthetase_CS"/>
</dbReference>
<dbReference type="NCBIfam" id="NF010568">
    <property type="entry name" value="PRK13961.1"/>
    <property type="match status" value="1"/>
</dbReference>
<dbReference type="NCBIfam" id="TIGR00081">
    <property type="entry name" value="purC"/>
    <property type="match status" value="1"/>
</dbReference>
<dbReference type="PANTHER" id="PTHR43700">
    <property type="entry name" value="PHOSPHORIBOSYLAMINOIMIDAZOLE-SUCCINOCARBOXAMIDE SYNTHASE"/>
    <property type="match status" value="1"/>
</dbReference>
<dbReference type="PANTHER" id="PTHR43700:SF1">
    <property type="entry name" value="PHOSPHORIBOSYLAMINOIMIDAZOLE-SUCCINOCARBOXAMIDE SYNTHASE"/>
    <property type="match status" value="1"/>
</dbReference>
<dbReference type="Pfam" id="PF01259">
    <property type="entry name" value="SAICAR_synt"/>
    <property type="match status" value="1"/>
</dbReference>
<dbReference type="SUPFAM" id="SSF56104">
    <property type="entry name" value="SAICAR synthase-like"/>
    <property type="match status" value="1"/>
</dbReference>
<dbReference type="PROSITE" id="PS01057">
    <property type="entry name" value="SAICAR_SYNTHETASE_1"/>
    <property type="match status" value="1"/>
</dbReference>
<dbReference type="PROSITE" id="PS01058">
    <property type="entry name" value="SAICAR_SYNTHETASE_2"/>
    <property type="match status" value="1"/>
</dbReference>